<dbReference type="EC" id="3.5.1.-" evidence="1"/>
<dbReference type="EMBL" id="CR854996">
    <property type="protein sequence ID" value="CAH65756.1"/>
    <property type="molecule type" value="Genomic_DNA"/>
</dbReference>
<dbReference type="EMBL" id="CM000129">
    <property type="protein sequence ID" value="EEC76621.1"/>
    <property type="status" value="ALT_INIT"/>
    <property type="molecule type" value="Genomic_DNA"/>
</dbReference>
<dbReference type="SMR" id="Q01N44"/>
<dbReference type="STRING" id="39946.B8ATY3"/>
<dbReference type="EnsemblPlants" id="OsGoSa_04g0000110.01">
    <property type="protein sequence ID" value="OsGoSa_04g0000110.01"/>
    <property type="gene ID" value="OsGoSa_04g0000110"/>
</dbReference>
<dbReference type="EnsemblPlants" id="OsIR64_04g0000100.01">
    <property type="protein sequence ID" value="OsIR64_04g0000100.01"/>
    <property type="gene ID" value="OsIR64_04g0000100"/>
</dbReference>
<dbReference type="EnsemblPlants" id="OsKYG_04g0000120.01">
    <property type="protein sequence ID" value="OsKYG_04g0000120.01"/>
    <property type="gene ID" value="OsKYG_04g0000120"/>
</dbReference>
<dbReference type="EnsemblPlants" id="OsLaMu_04g0000090.01">
    <property type="protein sequence ID" value="OsLaMu_04g0000090.01"/>
    <property type="gene ID" value="OsLaMu_04g0000090"/>
</dbReference>
<dbReference type="EnsemblPlants" id="OsLima_04g0000100.01">
    <property type="protein sequence ID" value="OsLima_04g0000100.01"/>
    <property type="gene ID" value="OsLima_04g0000100"/>
</dbReference>
<dbReference type="EnsemblPlants" id="OsMH63_04G000090_01">
    <property type="protein sequence ID" value="OsMH63_04G000090_01"/>
    <property type="gene ID" value="OsMH63_04G000090"/>
</dbReference>
<dbReference type="EnsemblPlants" id="OsPr106_04g0000080.01">
    <property type="protein sequence ID" value="OsPr106_04g0000080.01"/>
    <property type="gene ID" value="OsPr106_04g0000080"/>
</dbReference>
<dbReference type="Gramene" id="OsGoSa_04g0000110.01">
    <property type="protein sequence ID" value="OsGoSa_04g0000110.01"/>
    <property type="gene ID" value="OsGoSa_04g0000110"/>
</dbReference>
<dbReference type="Gramene" id="OsIR64_04g0000100.01">
    <property type="protein sequence ID" value="OsIR64_04g0000100.01"/>
    <property type="gene ID" value="OsIR64_04g0000100"/>
</dbReference>
<dbReference type="Gramene" id="OsKYG_04g0000120.01">
    <property type="protein sequence ID" value="OsKYG_04g0000120.01"/>
    <property type="gene ID" value="OsKYG_04g0000120"/>
</dbReference>
<dbReference type="Gramene" id="OsLaMu_04g0000090.01">
    <property type="protein sequence ID" value="OsLaMu_04g0000090.01"/>
    <property type="gene ID" value="OsLaMu_04g0000090"/>
</dbReference>
<dbReference type="Gramene" id="OsLima_04g0000100.01">
    <property type="protein sequence ID" value="OsLima_04g0000100.01"/>
    <property type="gene ID" value="OsLima_04g0000100"/>
</dbReference>
<dbReference type="Gramene" id="OsMH63_04G000090_01">
    <property type="protein sequence ID" value="OsMH63_04G000090_01"/>
    <property type="gene ID" value="OsMH63_04G000090"/>
</dbReference>
<dbReference type="Gramene" id="OsPr106_04g0000080.01">
    <property type="protein sequence ID" value="OsPr106_04g0000080.01"/>
    <property type="gene ID" value="OsPr106_04g0000080"/>
</dbReference>
<dbReference type="HOGENOM" id="CLU_009600_0_2_1"/>
<dbReference type="OrthoDB" id="421993at2759"/>
<dbReference type="Proteomes" id="UP000007015">
    <property type="component" value="Chromosome 4"/>
</dbReference>
<dbReference type="GO" id="GO:0005789">
    <property type="term" value="C:endoplasmic reticulum membrane"/>
    <property type="evidence" value="ECO:0007669"/>
    <property type="project" value="UniProtKB-SubCell"/>
</dbReference>
<dbReference type="GO" id="GO:0005886">
    <property type="term" value="C:plasma membrane"/>
    <property type="evidence" value="ECO:0007669"/>
    <property type="project" value="UniProtKB-SubCell"/>
</dbReference>
<dbReference type="GO" id="GO:0047412">
    <property type="term" value="F:N-(long-chain-acyl)ethanolamine deacylase activity"/>
    <property type="evidence" value="ECO:0007669"/>
    <property type="project" value="TreeGrafter"/>
</dbReference>
<dbReference type="GO" id="GO:0016042">
    <property type="term" value="P:lipid catabolic process"/>
    <property type="evidence" value="ECO:0007669"/>
    <property type="project" value="UniProtKB-KW"/>
</dbReference>
<dbReference type="GO" id="GO:0070291">
    <property type="term" value="P:N-acylethanolamine metabolic process"/>
    <property type="evidence" value="ECO:0007669"/>
    <property type="project" value="TreeGrafter"/>
</dbReference>
<dbReference type="Gene3D" id="3.90.1300.10">
    <property type="entry name" value="Amidase signature (AS) domain"/>
    <property type="match status" value="1"/>
</dbReference>
<dbReference type="InterPro" id="IPR000120">
    <property type="entry name" value="Amidase"/>
</dbReference>
<dbReference type="InterPro" id="IPR020556">
    <property type="entry name" value="Amidase_CS"/>
</dbReference>
<dbReference type="InterPro" id="IPR023631">
    <property type="entry name" value="Amidase_dom"/>
</dbReference>
<dbReference type="InterPro" id="IPR036928">
    <property type="entry name" value="AS_sf"/>
</dbReference>
<dbReference type="PANTHER" id="PTHR11895:SF156">
    <property type="entry name" value="FATTY ACID AMIDE HYDROLASE"/>
    <property type="match status" value="1"/>
</dbReference>
<dbReference type="PANTHER" id="PTHR11895">
    <property type="entry name" value="TRANSAMIDASE"/>
    <property type="match status" value="1"/>
</dbReference>
<dbReference type="Pfam" id="PF01425">
    <property type="entry name" value="Amidase"/>
    <property type="match status" value="1"/>
</dbReference>
<dbReference type="SUPFAM" id="SSF75304">
    <property type="entry name" value="Amidase signature (AS) enzymes"/>
    <property type="match status" value="1"/>
</dbReference>
<dbReference type="PROSITE" id="PS00571">
    <property type="entry name" value="AMIDASES"/>
    <property type="match status" value="1"/>
</dbReference>
<reference key="1">
    <citation type="journal article" date="2002" name="Nature">
        <title>Sequence and analysis of rice chromosome 4.</title>
        <authorList>
            <person name="Feng Q."/>
            <person name="Zhang Y."/>
            <person name="Hao P."/>
            <person name="Wang S."/>
            <person name="Fu G."/>
            <person name="Huang Y."/>
            <person name="Li Y."/>
            <person name="Zhu J."/>
            <person name="Liu Y."/>
            <person name="Hu X."/>
            <person name="Jia P."/>
            <person name="Zhang Y."/>
            <person name="Zhao Q."/>
            <person name="Ying K."/>
            <person name="Yu S."/>
            <person name="Tang Y."/>
            <person name="Weng Q."/>
            <person name="Zhang L."/>
            <person name="Lu Y."/>
            <person name="Mu J."/>
            <person name="Lu Y."/>
            <person name="Zhang L.S."/>
            <person name="Yu Z."/>
            <person name="Fan D."/>
            <person name="Liu X."/>
            <person name="Lu T."/>
            <person name="Li C."/>
            <person name="Wu Y."/>
            <person name="Sun T."/>
            <person name="Lei H."/>
            <person name="Li T."/>
            <person name="Hu H."/>
            <person name="Guan J."/>
            <person name="Wu M."/>
            <person name="Zhang R."/>
            <person name="Zhou B."/>
            <person name="Chen Z."/>
            <person name="Chen L."/>
            <person name="Jin Z."/>
            <person name="Wang R."/>
            <person name="Yin H."/>
            <person name="Cai Z."/>
            <person name="Ren S."/>
            <person name="Lv G."/>
            <person name="Gu W."/>
            <person name="Zhu G."/>
            <person name="Tu Y."/>
            <person name="Jia J."/>
            <person name="Zhang Y."/>
            <person name="Chen J."/>
            <person name="Kang H."/>
            <person name="Chen X."/>
            <person name="Shao C."/>
            <person name="Sun Y."/>
            <person name="Hu Q."/>
            <person name="Zhang X."/>
            <person name="Zhang W."/>
            <person name="Wang L."/>
            <person name="Ding C."/>
            <person name="Sheng H."/>
            <person name="Gu J."/>
            <person name="Chen S."/>
            <person name="Ni L."/>
            <person name="Zhu F."/>
            <person name="Chen W."/>
            <person name="Lan L."/>
            <person name="Lai Y."/>
            <person name="Cheng Z."/>
            <person name="Gu M."/>
            <person name="Jiang J."/>
            <person name="Li J."/>
            <person name="Hong G."/>
            <person name="Xue Y."/>
            <person name="Han B."/>
        </authorList>
    </citation>
    <scope>NUCLEOTIDE SEQUENCE [LARGE SCALE GENOMIC DNA]</scope>
    <source>
        <strain>cv. Guang-Lu-Ai No.4</strain>
    </source>
</reference>
<reference key="2">
    <citation type="journal article" date="2005" name="PLoS Biol.">
        <title>The genomes of Oryza sativa: a history of duplications.</title>
        <authorList>
            <person name="Yu J."/>
            <person name="Wang J."/>
            <person name="Lin W."/>
            <person name="Li S."/>
            <person name="Li H."/>
            <person name="Zhou J."/>
            <person name="Ni P."/>
            <person name="Dong W."/>
            <person name="Hu S."/>
            <person name="Zeng C."/>
            <person name="Zhang J."/>
            <person name="Zhang Y."/>
            <person name="Li R."/>
            <person name="Xu Z."/>
            <person name="Li S."/>
            <person name="Li X."/>
            <person name="Zheng H."/>
            <person name="Cong L."/>
            <person name="Lin L."/>
            <person name="Yin J."/>
            <person name="Geng J."/>
            <person name="Li G."/>
            <person name="Shi J."/>
            <person name="Liu J."/>
            <person name="Lv H."/>
            <person name="Li J."/>
            <person name="Wang J."/>
            <person name="Deng Y."/>
            <person name="Ran L."/>
            <person name="Shi X."/>
            <person name="Wang X."/>
            <person name="Wu Q."/>
            <person name="Li C."/>
            <person name="Ren X."/>
            <person name="Wang J."/>
            <person name="Wang X."/>
            <person name="Li D."/>
            <person name="Liu D."/>
            <person name="Zhang X."/>
            <person name="Ji Z."/>
            <person name="Zhao W."/>
            <person name="Sun Y."/>
            <person name="Zhang Z."/>
            <person name="Bao J."/>
            <person name="Han Y."/>
            <person name="Dong L."/>
            <person name="Ji J."/>
            <person name="Chen P."/>
            <person name="Wu S."/>
            <person name="Liu J."/>
            <person name="Xiao Y."/>
            <person name="Bu D."/>
            <person name="Tan J."/>
            <person name="Yang L."/>
            <person name="Ye C."/>
            <person name="Zhang J."/>
            <person name="Xu J."/>
            <person name="Zhou Y."/>
            <person name="Yu Y."/>
            <person name="Zhang B."/>
            <person name="Zhuang S."/>
            <person name="Wei H."/>
            <person name="Liu B."/>
            <person name="Lei M."/>
            <person name="Yu H."/>
            <person name="Li Y."/>
            <person name="Xu H."/>
            <person name="Wei S."/>
            <person name="He X."/>
            <person name="Fang L."/>
            <person name="Zhang Z."/>
            <person name="Zhang Y."/>
            <person name="Huang X."/>
            <person name="Su Z."/>
            <person name="Tong W."/>
            <person name="Li J."/>
            <person name="Tong Z."/>
            <person name="Li S."/>
            <person name="Ye J."/>
            <person name="Wang L."/>
            <person name="Fang L."/>
            <person name="Lei T."/>
            <person name="Chen C.-S."/>
            <person name="Chen H.-C."/>
            <person name="Xu Z."/>
            <person name="Li H."/>
            <person name="Huang H."/>
            <person name="Zhang F."/>
            <person name="Xu H."/>
            <person name="Li N."/>
            <person name="Zhao C."/>
            <person name="Li S."/>
            <person name="Dong L."/>
            <person name="Huang Y."/>
            <person name="Li L."/>
            <person name="Xi Y."/>
            <person name="Qi Q."/>
            <person name="Li W."/>
            <person name="Zhang B."/>
            <person name="Hu W."/>
            <person name="Zhang Y."/>
            <person name="Tian X."/>
            <person name="Jiao Y."/>
            <person name="Liang X."/>
            <person name="Jin J."/>
            <person name="Gao L."/>
            <person name="Zheng W."/>
            <person name="Hao B."/>
            <person name="Liu S.-M."/>
            <person name="Wang W."/>
            <person name="Yuan L."/>
            <person name="Cao M."/>
            <person name="McDermott J."/>
            <person name="Samudrala R."/>
            <person name="Wang J."/>
            <person name="Wong G.K.-S."/>
            <person name="Yang H."/>
        </authorList>
    </citation>
    <scope>NUCLEOTIDE SEQUENCE [LARGE SCALE GENOMIC DNA]</scope>
    <source>
        <strain>cv. 93-11</strain>
    </source>
</reference>
<keyword id="KW-1003">Cell membrane</keyword>
<keyword id="KW-0256">Endoplasmic reticulum</keyword>
<keyword id="KW-0378">Hydrolase</keyword>
<keyword id="KW-0442">Lipid degradation</keyword>
<keyword id="KW-0443">Lipid metabolism</keyword>
<keyword id="KW-0472">Membrane</keyword>
<keyword id="KW-1185">Reference proteome</keyword>
<proteinExistence type="inferred from homology"/>
<accession>Q01N44</accession>
<accession>B8ATY3</accession>
<feature type="chain" id="PRO_0000451043" description="Fatty acid amide hydrolase">
    <location>
        <begin position="1"/>
        <end position="608"/>
    </location>
</feature>
<feature type="active site" description="Charge relay system" evidence="2">
    <location>
        <position position="206"/>
    </location>
</feature>
<feature type="active site" description="Charge relay system" evidence="2">
    <location>
        <position position="282"/>
    </location>
</feature>
<feature type="active site" description="Acyl-ester intermediate" evidence="2">
    <location>
        <position position="306"/>
    </location>
</feature>
<feature type="binding site" evidence="2">
    <location>
        <begin position="303"/>
        <end position="306"/>
    </location>
    <ligand>
        <name>substrate</name>
    </ligand>
</feature>
<comment type="function">
    <text evidence="1">Catalyzes the hydrolysis of bioactive endogenous fatty acid amides to their corresponding acids. The hydrolysis of endogenous amidated lipids terminates their participation as lipid mediators in various signaling systems. Converts a wide range of N-acylethanolamines (NAEs) to their corresponding free fatty acids and ethanolamine.</text>
</comment>
<comment type="catalytic activity">
    <reaction evidence="1">
        <text>N-(9Z,12Z-octadecadienoyl)-ethanolamine + H2O = ethanolamine + (9Z,12Z)-octadecadienoate</text>
        <dbReference type="Rhea" id="RHEA:35567"/>
        <dbReference type="ChEBI" id="CHEBI:15377"/>
        <dbReference type="ChEBI" id="CHEBI:30245"/>
        <dbReference type="ChEBI" id="CHEBI:57603"/>
        <dbReference type="ChEBI" id="CHEBI:64032"/>
    </reaction>
    <physiologicalReaction direction="left-to-right" evidence="1">
        <dbReference type="Rhea" id="RHEA:35568"/>
    </physiologicalReaction>
</comment>
<comment type="catalytic activity">
    <reaction evidence="1">
        <text>N-hexadecanoylethanolamine + H2O = ethanolamine + hexadecanoate</text>
        <dbReference type="Rhea" id="RHEA:45064"/>
        <dbReference type="ChEBI" id="CHEBI:7896"/>
        <dbReference type="ChEBI" id="CHEBI:15377"/>
        <dbReference type="ChEBI" id="CHEBI:57603"/>
        <dbReference type="ChEBI" id="CHEBI:71464"/>
    </reaction>
    <physiologicalReaction direction="left-to-right" evidence="1">
        <dbReference type="Rhea" id="RHEA:45065"/>
    </physiologicalReaction>
</comment>
<comment type="catalytic activity">
    <reaction evidence="1">
        <text>N-dodecanoylethanolamine + H2O = dodecanoate + ethanolamine</text>
        <dbReference type="Rhea" id="RHEA:45456"/>
        <dbReference type="ChEBI" id="CHEBI:15377"/>
        <dbReference type="ChEBI" id="CHEBI:18262"/>
        <dbReference type="ChEBI" id="CHEBI:57603"/>
        <dbReference type="ChEBI" id="CHEBI:85263"/>
    </reaction>
    <physiologicalReaction direction="left-to-right" evidence="1">
        <dbReference type="Rhea" id="RHEA:45457"/>
    </physiologicalReaction>
</comment>
<comment type="activity regulation">
    <text evidence="1">Inhibited by methyl arachidonyl fluorophosphonate (MAFP).</text>
</comment>
<comment type="subunit">
    <text evidence="2">Forms homodimers.</text>
</comment>
<comment type="subcellular location">
    <subcellularLocation>
        <location evidence="2">Endoplasmic reticulum membrane</location>
    </subcellularLocation>
    <subcellularLocation>
        <location evidence="2">Cell membrane</location>
    </subcellularLocation>
</comment>
<comment type="similarity">
    <text evidence="3">Belongs to the amidase family.</text>
</comment>
<comment type="sequence caution" evidence="3">
    <conflict type="erroneous initiation">
        <sequence resource="EMBL-CDS" id="EEC76621"/>
    </conflict>
    <text>Truncated N-terminus.</text>
</comment>
<organism>
    <name type="scientific">Oryza sativa subsp. indica</name>
    <name type="common">Rice</name>
    <dbReference type="NCBI Taxonomy" id="39946"/>
    <lineage>
        <taxon>Eukaryota</taxon>
        <taxon>Viridiplantae</taxon>
        <taxon>Streptophyta</taxon>
        <taxon>Embryophyta</taxon>
        <taxon>Tracheophyta</taxon>
        <taxon>Spermatophyta</taxon>
        <taxon>Magnoliopsida</taxon>
        <taxon>Liliopsida</taxon>
        <taxon>Poales</taxon>
        <taxon>Poaceae</taxon>
        <taxon>BOP clade</taxon>
        <taxon>Oryzoideae</taxon>
        <taxon>Oryzeae</taxon>
        <taxon>Oryzinae</taxon>
        <taxon>Oryza</taxon>
        <taxon>Oryza sativa</taxon>
    </lineage>
</organism>
<protein>
    <recommendedName>
        <fullName evidence="3">Fatty acid amide hydrolase</fullName>
        <ecNumber evidence="1">3.5.1.-</ecNumber>
    </recommendedName>
    <alternativeName>
        <fullName evidence="3">N-acylethanolamine amidohydrolase</fullName>
    </alternativeName>
</protein>
<sequence length="608" mass="66547">MGKPPRAMTPVEEVDLSAVRYQSPSLQAPHLTGFSLRAFVWLMESPLFGRLLTSVLKSQNNITRMLQDTVIPERPMYLPEYPPQEPEQGVLLLGDDRDPVDRVEEALHCLPPYDPSLRWPAGDKPPFLYWKIRDFAHAYRSGITTPSVVAEHIIAGVEEWSNKKPPMPMLVYFNADDLRKQAEASTKRFQQGNPISILDGIFIAIKDDIDCFPYPSKGATTFFDKIRSVEKDAVCVARLRKCGVLFIGKANMHELGLGVTGNNPNYGTARNPHSIDRYTGGSSSGPAALVSSGLCSAAIGTDGGGSVRIPSSLCGIIGLKTTYGRTDMTGALCDCGTVEVASPLAASVEDALLVYSAIAGSRPMDKLTLRPSPLCVPNLVSPDNNNILGSVKIGKYTEWFHDVSDRDISNTCEDALNLLCSSFGCQIEEIILPELEEMRTAHVVSIGTESFCDLNPHYRAGKRTEFTLDTRTSLALFGSFTSTDYVASQRIRRRIMYYHNEAFKKVDVIATPTTGITAPEIPQSSLKLGESNYVVSAYLMRFVIAGNLLGLPAITVPVGHDKQGLPIGLQLIGRPWGEASLLRVASAIEELCLKKRKRPSAFHDILNA</sequence>
<gene>
    <name evidence="3" type="primary">FAAH</name>
    <name evidence="4" type="ORF">OSIGBa0123D13.5</name>
</gene>
<evidence type="ECO:0000250" key="1">
    <source>
        <dbReference type="UniProtKB" id="Q0JFH7"/>
    </source>
</evidence>
<evidence type="ECO:0000250" key="2">
    <source>
        <dbReference type="UniProtKB" id="Q7XJJ7"/>
    </source>
</evidence>
<evidence type="ECO:0000305" key="3"/>
<evidence type="ECO:0000312" key="4">
    <source>
        <dbReference type="EMBL" id="CAH65756.1"/>
    </source>
</evidence>
<name>FAAH_ORYSI</name>